<accession>Q65VD4</accession>
<gene>
    <name evidence="1" type="primary">rpsF</name>
    <name type="ordered locus">MS0469</name>
</gene>
<organism>
    <name type="scientific">Mannheimia succiniciproducens (strain KCTC 0769BP / MBEL55E)</name>
    <dbReference type="NCBI Taxonomy" id="221988"/>
    <lineage>
        <taxon>Bacteria</taxon>
        <taxon>Pseudomonadati</taxon>
        <taxon>Pseudomonadota</taxon>
        <taxon>Gammaproteobacteria</taxon>
        <taxon>Pasteurellales</taxon>
        <taxon>Pasteurellaceae</taxon>
        <taxon>Basfia</taxon>
    </lineage>
</organism>
<protein>
    <recommendedName>
        <fullName evidence="1">Small ribosomal subunit protein bS6</fullName>
    </recommendedName>
    <alternativeName>
        <fullName evidence="3">30S ribosomal protein S6</fullName>
    </alternativeName>
</protein>
<sequence>MRHYEIVFMVHPDQSEQVPGMIERYTGSVKEAGGQIHRLEDWGRRQLAYPINKLHKAHYVLMNVEAPQEVIDELETTFRYNDAVLRNVIIRTKHAVTEASPMVKAKDERRASAEVENNDFEDAEE</sequence>
<reference key="1">
    <citation type="journal article" date="2004" name="Nat. Biotechnol.">
        <title>The genome sequence of the capnophilic rumen bacterium Mannheimia succiniciproducens.</title>
        <authorList>
            <person name="Hong S.H."/>
            <person name="Kim J.S."/>
            <person name="Lee S.Y."/>
            <person name="In Y.H."/>
            <person name="Choi S.S."/>
            <person name="Rih J.-K."/>
            <person name="Kim C.H."/>
            <person name="Jeong H."/>
            <person name="Hur C.G."/>
            <person name="Kim J.J."/>
        </authorList>
    </citation>
    <scope>NUCLEOTIDE SEQUENCE [LARGE SCALE GENOMIC DNA]</scope>
    <source>
        <strain>KCTC 0769BP / MBEL55E</strain>
    </source>
</reference>
<name>RS6_MANSM</name>
<evidence type="ECO:0000255" key="1">
    <source>
        <dbReference type="HAMAP-Rule" id="MF_00360"/>
    </source>
</evidence>
<evidence type="ECO:0000256" key="2">
    <source>
        <dbReference type="SAM" id="MobiDB-lite"/>
    </source>
</evidence>
<evidence type="ECO:0000305" key="3"/>
<keyword id="KW-0687">Ribonucleoprotein</keyword>
<keyword id="KW-0689">Ribosomal protein</keyword>
<keyword id="KW-0694">RNA-binding</keyword>
<keyword id="KW-0699">rRNA-binding</keyword>
<dbReference type="EMBL" id="AE016827">
    <property type="protein sequence ID" value="AAU37076.1"/>
    <property type="molecule type" value="Genomic_DNA"/>
</dbReference>
<dbReference type="RefSeq" id="WP_011199651.1">
    <property type="nucleotide sequence ID" value="NC_006300.1"/>
</dbReference>
<dbReference type="SMR" id="Q65VD4"/>
<dbReference type="STRING" id="221988.MS0469"/>
<dbReference type="KEGG" id="msu:MS0469"/>
<dbReference type="eggNOG" id="COG0360">
    <property type="taxonomic scope" value="Bacteria"/>
</dbReference>
<dbReference type="HOGENOM" id="CLU_113441_6_1_6"/>
<dbReference type="OrthoDB" id="9812702at2"/>
<dbReference type="Proteomes" id="UP000000607">
    <property type="component" value="Chromosome"/>
</dbReference>
<dbReference type="GO" id="GO:0022627">
    <property type="term" value="C:cytosolic small ribosomal subunit"/>
    <property type="evidence" value="ECO:0007669"/>
    <property type="project" value="TreeGrafter"/>
</dbReference>
<dbReference type="GO" id="GO:0070181">
    <property type="term" value="F:small ribosomal subunit rRNA binding"/>
    <property type="evidence" value="ECO:0007669"/>
    <property type="project" value="TreeGrafter"/>
</dbReference>
<dbReference type="GO" id="GO:0003735">
    <property type="term" value="F:structural constituent of ribosome"/>
    <property type="evidence" value="ECO:0007669"/>
    <property type="project" value="InterPro"/>
</dbReference>
<dbReference type="GO" id="GO:0006412">
    <property type="term" value="P:translation"/>
    <property type="evidence" value="ECO:0007669"/>
    <property type="project" value="UniProtKB-UniRule"/>
</dbReference>
<dbReference type="CDD" id="cd00473">
    <property type="entry name" value="bS6"/>
    <property type="match status" value="1"/>
</dbReference>
<dbReference type="FunFam" id="3.30.70.60:FF:000003">
    <property type="entry name" value="30S ribosomal protein S6"/>
    <property type="match status" value="1"/>
</dbReference>
<dbReference type="Gene3D" id="3.30.70.60">
    <property type="match status" value="1"/>
</dbReference>
<dbReference type="HAMAP" id="MF_00360">
    <property type="entry name" value="Ribosomal_bS6"/>
    <property type="match status" value="1"/>
</dbReference>
<dbReference type="InterPro" id="IPR000529">
    <property type="entry name" value="Ribosomal_bS6"/>
</dbReference>
<dbReference type="InterPro" id="IPR020815">
    <property type="entry name" value="Ribosomal_bS6_CS"/>
</dbReference>
<dbReference type="InterPro" id="IPR035980">
    <property type="entry name" value="Ribosomal_bS6_sf"/>
</dbReference>
<dbReference type="InterPro" id="IPR020814">
    <property type="entry name" value="Ribosomal_S6_plastid/chlpt"/>
</dbReference>
<dbReference type="InterPro" id="IPR014717">
    <property type="entry name" value="Transl_elong_EF1B/ribsomal_bS6"/>
</dbReference>
<dbReference type="NCBIfam" id="TIGR00166">
    <property type="entry name" value="S6"/>
    <property type="match status" value="1"/>
</dbReference>
<dbReference type="PANTHER" id="PTHR21011">
    <property type="entry name" value="MITOCHONDRIAL 28S RIBOSOMAL PROTEIN S6"/>
    <property type="match status" value="1"/>
</dbReference>
<dbReference type="PANTHER" id="PTHR21011:SF1">
    <property type="entry name" value="SMALL RIBOSOMAL SUBUNIT PROTEIN BS6M"/>
    <property type="match status" value="1"/>
</dbReference>
<dbReference type="Pfam" id="PF01250">
    <property type="entry name" value="Ribosomal_S6"/>
    <property type="match status" value="1"/>
</dbReference>
<dbReference type="SUPFAM" id="SSF54995">
    <property type="entry name" value="Ribosomal protein S6"/>
    <property type="match status" value="1"/>
</dbReference>
<dbReference type="PROSITE" id="PS01048">
    <property type="entry name" value="RIBOSOMAL_S6"/>
    <property type="match status" value="1"/>
</dbReference>
<feature type="chain" id="PRO_0000176791" description="Small ribosomal subunit protein bS6">
    <location>
        <begin position="1"/>
        <end position="125"/>
    </location>
</feature>
<feature type="region of interest" description="Disordered" evidence="2">
    <location>
        <begin position="99"/>
        <end position="125"/>
    </location>
</feature>
<feature type="compositionally biased region" description="Basic and acidic residues" evidence="2">
    <location>
        <begin position="104"/>
        <end position="113"/>
    </location>
</feature>
<feature type="compositionally biased region" description="Acidic residues" evidence="2">
    <location>
        <begin position="116"/>
        <end position="125"/>
    </location>
</feature>
<proteinExistence type="inferred from homology"/>
<comment type="function">
    <text evidence="1">Binds together with bS18 to 16S ribosomal RNA.</text>
</comment>
<comment type="similarity">
    <text evidence="1">Belongs to the bacterial ribosomal protein bS6 family.</text>
</comment>